<keyword id="KW-0227">DNA damage</keyword>
<keyword id="KW-0233">DNA recombination</keyword>
<keyword id="KW-0234">DNA repair</keyword>
<keyword id="KW-0235">DNA replication</keyword>
<keyword id="KW-0238">DNA-binding</keyword>
<reference key="1">
    <citation type="journal article" date="2000" name="Nature">
        <title>Complete DNA sequence of a serogroup A strain of Neisseria meningitidis Z2491.</title>
        <authorList>
            <person name="Parkhill J."/>
            <person name="Achtman M."/>
            <person name="James K.D."/>
            <person name="Bentley S.D."/>
            <person name="Churcher C.M."/>
            <person name="Klee S.R."/>
            <person name="Morelli G."/>
            <person name="Basham D."/>
            <person name="Brown D."/>
            <person name="Chillingworth T."/>
            <person name="Davies R.M."/>
            <person name="Davis P."/>
            <person name="Devlin K."/>
            <person name="Feltwell T."/>
            <person name="Hamlin N."/>
            <person name="Holroyd S."/>
            <person name="Jagels K."/>
            <person name="Leather S."/>
            <person name="Moule S."/>
            <person name="Mungall K.L."/>
            <person name="Quail M.A."/>
            <person name="Rajandream M.A."/>
            <person name="Rutherford K.M."/>
            <person name="Simmonds M."/>
            <person name="Skelton J."/>
            <person name="Whitehead S."/>
            <person name="Spratt B.G."/>
            <person name="Barrell B.G."/>
        </authorList>
    </citation>
    <scope>NUCLEOTIDE SEQUENCE [LARGE SCALE GENOMIC DNA]</scope>
    <source>
        <strain>DSM 15465 / Z2491</strain>
    </source>
</reference>
<evidence type="ECO:0000255" key="1">
    <source>
        <dbReference type="HAMAP-Rule" id="MF_00984"/>
    </source>
</evidence>
<evidence type="ECO:0000256" key="2">
    <source>
        <dbReference type="SAM" id="MobiDB-lite"/>
    </source>
</evidence>
<proteinExistence type="inferred from homology"/>
<protein>
    <recommendedName>
        <fullName evidence="1">Single-stranded DNA-binding protein</fullName>
        <shortName evidence="1">SSB</shortName>
    </recommendedName>
</protein>
<comment type="function">
    <text evidence="1">Plays an important role in DNA replication, recombination and repair. Binds to ssDNA and to an array of partner proteins to recruit them to their sites of action during DNA metabolism.</text>
</comment>
<comment type="subunit">
    <text evidence="1">Homotetramer.</text>
</comment>
<gene>
    <name type="primary">ssb</name>
    <name type="ordered locus">NMA1672</name>
</gene>
<accession>P66848</accession>
<accession>A1ISP5</accession>
<accession>Q9JRF8</accession>
<dbReference type="EMBL" id="AL157959">
    <property type="protein sequence ID" value="CAM08805.1"/>
    <property type="molecule type" value="Genomic_DNA"/>
</dbReference>
<dbReference type="RefSeq" id="WP_002212976.1">
    <property type="nucleotide sequence ID" value="NC_003116.1"/>
</dbReference>
<dbReference type="SMR" id="P66848"/>
<dbReference type="EnsemblBacteria" id="CAM08805">
    <property type="protein sequence ID" value="CAM08805"/>
    <property type="gene ID" value="NMA1672"/>
</dbReference>
<dbReference type="KEGG" id="nma:NMA1672"/>
<dbReference type="HOGENOM" id="CLU_078758_0_1_4"/>
<dbReference type="Proteomes" id="UP000000626">
    <property type="component" value="Chromosome"/>
</dbReference>
<dbReference type="GO" id="GO:0009295">
    <property type="term" value="C:nucleoid"/>
    <property type="evidence" value="ECO:0007669"/>
    <property type="project" value="TreeGrafter"/>
</dbReference>
<dbReference type="GO" id="GO:0003697">
    <property type="term" value="F:single-stranded DNA binding"/>
    <property type="evidence" value="ECO:0007669"/>
    <property type="project" value="UniProtKB-UniRule"/>
</dbReference>
<dbReference type="GO" id="GO:0006310">
    <property type="term" value="P:DNA recombination"/>
    <property type="evidence" value="ECO:0007669"/>
    <property type="project" value="UniProtKB-UniRule"/>
</dbReference>
<dbReference type="GO" id="GO:0006281">
    <property type="term" value="P:DNA repair"/>
    <property type="evidence" value="ECO:0007669"/>
    <property type="project" value="UniProtKB-UniRule"/>
</dbReference>
<dbReference type="GO" id="GO:0006260">
    <property type="term" value="P:DNA replication"/>
    <property type="evidence" value="ECO:0007669"/>
    <property type="project" value="UniProtKB-UniRule"/>
</dbReference>
<dbReference type="CDD" id="cd04496">
    <property type="entry name" value="SSB_OBF"/>
    <property type="match status" value="1"/>
</dbReference>
<dbReference type="FunFam" id="2.40.50.140:FF:000355">
    <property type="entry name" value="Single-stranded DNA-binding protein"/>
    <property type="match status" value="1"/>
</dbReference>
<dbReference type="Gene3D" id="2.40.50.140">
    <property type="entry name" value="Nucleic acid-binding proteins"/>
    <property type="match status" value="1"/>
</dbReference>
<dbReference type="HAMAP" id="MF_00984">
    <property type="entry name" value="SSB"/>
    <property type="match status" value="1"/>
</dbReference>
<dbReference type="InterPro" id="IPR012340">
    <property type="entry name" value="NA-bd_OB-fold"/>
</dbReference>
<dbReference type="InterPro" id="IPR000424">
    <property type="entry name" value="Primosome_PriB/ssb"/>
</dbReference>
<dbReference type="InterPro" id="IPR011344">
    <property type="entry name" value="ssDNA-bd"/>
</dbReference>
<dbReference type="NCBIfam" id="TIGR00621">
    <property type="entry name" value="ssb"/>
    <property type="match status" value="1"/>
</dbReference>
<dbReference type="PANTHER" id="PTHR10302">
    <property type="entry name" value="SINGLE-STRANDED DNA-BINDING PROTEIN"/>
    <property type="match status" value="1"/>
</dbReference>
<dbReference type="PANTHER" id="PTHR10302:SF27">
    <property type="entry name" value="SINGLE-STRANDED DNA-BINDING PROTEIN"/>
    <property type="match status" value="1"/>
</dbReference>
<dbReference type="Pfam" id="PF00436">
    <property type="entry name" value="SSB"/>
    <property type="match status" value="1"/>
</dbReference>
<dbReference type="PIRSF" id="PIRSF002070">
    <property type="entry name" value="SSB"/>
    <property type="match status" value="1"/>
</dbReference>
<dbReference type="SUPFAM" id="SSF50249">
    <property type="entry name" value="Nucleic acid-binding proteins"/>
    <property type="match status" value="1"/>
</dbReference>
<dbReference type="PROSITE" id="PS50935">
    <property type="entry name" value="SSB"/>
    <property type="match status" value="1"/>
</dbReference>
<feature type="chain" id="PRO_0000096070" description="Single-stranded DNA-binding protein">
    <location>
        <begin position="1"/>
        <end position="174"/>
    </location>
</feature>
<feature type="domain" description="SSB" evidence="1">
    <location>
        <begin position="3"/>
        <end position="107"/>
    </location>
</feature>
<feature type="region of interest" description="Disordered" evidence="2">
    <location>
        <begin position="108"/>
        <end position="174"/>
    </location>
</feature>
<feature type="short sequence motif" description="Important for interaction with partner proteins" evidence="1">
    <location>
        <begin position="169"/>
        <end position="174"/>
    </location>
</feature>
<feature type="compositionally biased region" description="Polar residues" evidence="2">
    <location>
        <begin position="123"/>
        <end position="139"/>
    </location>
</feature>
<feature type="compositionally biased region" description="Low complexity" evidence="2">
    <location>
        <begin position="147"/>
        <end position="165"/>
    </location>
</feature>
<name>SSB_NEIMA</name>
<organism>
    <name type="scientific">Neisseria meningitidis serogroup A / serotype 4A (strain DSM 15465 / Z2491)</name>
    <dbReference type="NCBI Taxonomy" id="122587"/>
    <lineage>
        <taxon>Bacteria</taxon>
        <taxon>Pseudomonadati</taxon>
        <taxon>Pseudomonadota</taxon>
        <taxon>Betaproteobacteria</taxon>
        <taxon>Neisseriales</taxon>
        <taxon>Neisseriaceae</taxon>
        <taxon>Neisseria</taxon>
    </lineage>
</organism>
<sequence>MSLNKVILIGRLGRDPEVRYMPNGEAVCNFSVATSETWNDRNGQRVERTEWHNITMYRKLAEIAGQYLKKGGLVYLEGRIQSRKYQGKDGIERTAYDIVANEMKMLGGRNENSGGAPYEEGYGQSQEAYQRPAQQSRQPASDAPSHPQEAPAAPRRQPVPAAAPVEDIDDDIPF</sequence>